<organism>
    <name type="scientific">Rattus norvegicus</name>
    <name type="common">Rat</name>
    <dbReference type="NCBI Taxonomy" id="10116"/>
    <lineage>
        <taxon>Eukaryota</taxon>
        <taxon>Metazoa</taxon>
        <taxon>Chordata</taxon>
        <taxon>Craniata</taxon>
        <taxon>Vertebrata</taxon>
        <taxon>Euteleostomi</taxon>
        <taxon>Mammalia</taxon>
        <taxon>Eutheria</taxon>
        <taxon>Euarchontoglires</taxon>
        <taxon>Glires</taxon>
        <taxon>Rodentia</taxon>
        <taxon>Myomorpha</taxon>
        <taxon>Muroidea</taxon>
        <taxon>Muridae</taxon>
        <taxon>Murinae</taxon>
        <taxon>Rattus</taxon>
    </lineage>
</organism>
<protein>
    <recommendedName>
        <fullName>Zinc finger C2HC domain-containing protein 1C</fullName>
    </recommendedName>
</protein>
<gene>
    <name type="primary">Zc2hc1c</name>
    <name type="synonym">Fam164c</name>
</gene>
<comment type="cofactor">
    <cofactor evidence="2">
        <name>Zn(2+)</name>
        <dbReference type="ChEBI" id="CHEBI:29105"/>
    </cofactor>
</comment>
<comment type="similarity">
    <text evidence="4">Belongs to the ZC2HC1 family.</text>
</comment>
<evidence type="ECO:0000255" key="1"/>
<evidence type="ECO:0000255" key="2">
    <source>
        <dbReference type="PROSITE-ProRule" id="PRU01371"/>
    </source>
</evidence>
<evidence type="ECO:0000256" key="3">
    <source>
        <dbReference type="SAM" id="MobiDB-lite"/>
    </source>
</evidence>
<evidence type="ECO:0000305" key="4"/>
<feature type="chain" id="PRO_0000089944" description="Zinc finger C2HC domain-containing protein 1C">
    <location>
        <begin position="1"/>
        <end position="525"/>
    </location>
</feature>
<feature type="zinc finger region" description="C2HC/C3H-type 1" evidence="2">
    <location>
        <begin position="378"/>
        <end position="407"/>
    </location>
</feature>
<feature type="zinc finger region" description="C2HC/C3H-type 2" evidence="2">
    <location>
        <begin position="487"/>
        <end position="516"/>
    </location>
</feature>
<feature type="region of interest" description="Disordered" evidence="3">
    <location>
        <begin position="23"/>
        <end position="48"/>
    </location>
</feature>
<feature type="region of interest" description="Disordered" evidence="3">
    <location>
        <begin position="85"/>
        <end position="107"/>
    </location>
</feature>
<feature type="region of interest" description="Disordered" evidence="3">
    <location>
        <begin position="145"/>
        <end position="171"/>
    </location>
</feature>
<feature type="region of interest" description="Disordered" evidence="3">
    <location>
        <begin position="292"/>
        <end position="316"/>
    </location>
</feature>
<feature type="region of interest" description="Disordered" evidence="3">
    <location>
        <begin position="330"/>
        <end position="349"/>
    </location>
</feature>
<feature type="region of interest" description="Disordered" evidence="3">
    <location>
        <begin position="356"/>
        <end position="379"/>
    </location>
</feature>
<feature type="coiled-coil region" evidence="1">
    <location>
        <begin position="207"/>
        <end position="252"/>
    </location>
</feature>
<feature type="compositionally biased region" description="Basic and acidic residues" evidence="3">
    <location>
        <begin position="23"/>
        <end position="34"/>
    </location>
</feature>
<feature type="compositionally biased region" description="Polar residues" evidence="3">
    <location>
        <begin position="36"/>
        <end position="48"/>
    </location>
</feature>
<feature type="compositionally biased region" description="Low complexity" evidence="3">
    <location>
        <begin position="90"/>
        <end position="102"/>
    </location>
</feature>
<feature type="compositionally biased region" description="Polar residues" evidence="3">
    <location>
        <begin position="301"/>
        <end position="312"/>
    </location>
</feature>
<feature type="compositionally biased region" description="Low complexity" evidence="3">
    <location>
        <begin position="359"/>
        <end position="373"/>
    </location>
</feature>
<feature type="binding site" evidence="2">
    <location>
        <position position="382"/>
    </location>
    <ligand>
        <name>Zn(2+)</name>
        <dbReference type="ChEBI" id="CHEBI:29105"/>
        <label>1</label>
    </ligand>
</feature>
<feature type="binding site" evidence="2">
    <location>
        <position position="385"/>
    </location>
    <ligand>
        <name>Zn(2+)</name>
        <dbReference type="ChEBI" id="CHEBI:29105"/>
        <label>1</label>
    </ligand>
</feature>
<feature type="binding site" evidence="2">
    <location>
        <position position="397"/>
    </location>
    <ligand>
        <name>Zn(2+)</name>
        <dbReference type="ChEBI" id="CHEBI:29105"/>
        <label>1</label>
    </ligand>
</feature>
<feature type="binding site" evidence="2">
    <location>
        <position position="401"/>
    </location>
    <ligand>
        <name>Zn(2+)</name>
        <dbReference type="ChEBI" id="CHEBI:29105"/>
        <label>1</label>
    </ligand>
</feature>
<feature type="binding site" evidence="2">
    <location>
        <position position="491"/>
    </location>
    <ligand>
        <name>Zn(2+)</name>
        <dbReference type="ChEBI" id="CHEBI:29105"/>
        <label>2</label>
    </ligand>
</feature>
<feature type="binding site" evidence="2">
    <location>
        <position position="494"/>
    </location>
    <ligand>
        <name>Zn(2+)</name>
        <dbReference type="ChEBI" id="CHEBI:29105"/>
        <label>2</label>
    </ligand>
</feature>
<feature type="binding site" evidence="2">
    <location>
        <position position="506"/>
    </location>
    <ligand>
        <name>Zn(2+)</name>
        <dbReference type="ChEBI" id="CHEBI:29105"/>
        <label>2</label>
    </ligand>
</feature>
<feature type="binding site" evidence="2">
    <location>
        <position position="510"/>
    </location>
    <ligand>
        <name>Zn(2+)</name>
        <dbReference type="ChEBI" id="CHEBI:29105"/>
        <label>2</label>
    </ligand>
</feature>
<name>ZC21C_RAT</name>
<proteinExistence type="evidence at transcript level"/>
<dbReference type="EMBL" id="BC078967">
    <property type="protein sequence ID" value="AAH78967.1"/>
    <property type="molecule type" value="mRNA"/>
</dbReference>
<dbReference type="RefSeq" id="NP_001014101.1">
    <property type="nucleotide sequence ID" value="NM_001014079.1"/>
</dbReference>
<dbReference type="SMR" id="Q6AYP4"/>
<dbReference type="FunCoup" id="Q6AYP4">
    <property type="interactions" value="94"/>
</dbReference>
<dbReference type="STRING" id="10116.ENSRNOP00000009156"/>
<dbReference type="GlyGen" id="Q6AYP4">
    <property type="glycosylation" value="1 site"/>
</dbReference>
<dbReference type="PhosphoSitePlus" id="Q6AYP4"/>
<dbReference type="PaxDb" id="10116-ENSRNOP00000009156"/>
<dbReference type="Ensembl" id="ENSRNOT00000009156.7">
    <property type="protein sequence ID" value="ENSRNOP00000009156.5"/>
    <property type="gene ID" value="ENSRNOG00000027115.7"/>
</dbReference>
<dbReference type="GeneID" id="314321"/>
<dbReference type="KEGG" id="rno:314321"/>
<dbReference type="AGR" id="RGD:1307122"/>
<dbReference type="CTD" id="79696"/>
<dbReference type="RGD" id="1307122">
    <property type="gene designation" value="Zc2hc1c"/>
</dbReference>
<dbReference type="eggNOG" id="KOG3940">
    <property type="taxonomic scope" value="Eukaryota"/>
</dbReference>
<dbReference type="GeneTree" id="ENSGT00940000160947"/>
<dbReference type="HOGENOM" id="CLU_039058_0_0_1"/>
<dbReference type="InParanoid" id="Q6AYP4"/>
<dbReference type="OMA" id="WGRSQEN"/>
<dbReference type="OrthoDB" id="10255185at2759"/>
<dbReference type="PhylomeDB" id="Q6AYP4"/>
<dbReference type="PRO" id="PR:Q6AYP4"/>
<dbReference type="Proteomes" id="UP000002494">
    <property type="component" value="Chromosome 6"/>
</dbReference>
<dbReference type="Bgee" id="ENSRNOG00000027115">
    <property type="expression patterns" value="Expressed in testis and 16 other cell types or tissues"/>
</dbReference>
<dbReference type="GO" id="GO:0008270">
    <property type="term" value="F:zinc ion binding"/>
    <property type="evidence" value="ECO:0007669"/>
    <property type="project" value="UniProtKB-KW"/>
</dbReference>
<dbReference type="Gene3D" id="3.30.160.60">
    <property type="entry name" value="Classic Zinc Finger"/>
    <property type="match status" value="1"/>
</dbReference>
<dbReference type="InterPro" id="IPR049899">
    <property type="entry name" value="Znf_C2HC_C3H"/>
</dbReference>
<dbReference type="InterPro" id="IPR026104">
    <property type="entry name" value="ZNF_C2HC_dom_1C"/>
</dbReference>
<dbReference type="PANTHER" id="PTHR14649">
    <property type="entry name" value="ZINC FINGER C2HC DOMAIN-CONTAINING PROTEIN 1C"/>
    <property type="match status" value="1"/>
</dbReference>
<dbReference type="PANTHER" id="PTHR14649:SF1">
    <property type="entry name" value="ZINC FINGER C2HC DOMAIN-CONTAINING PROTEIN 1C"/>
    <property type="match status" value="1"/>
</dbReference>
<dbReference type="Pfam" id="PF13913">
    <property type="entry name" value="zf-C2HC_2"/>
    <property type="match status" value="2"/>
</dbReference>
<dbReference type="PROSITE" id="PS52027">
    <property type="entry name" value="ZF_C2HC_C3H"/>
    <property type="match status" value="2"/>
</dbReference>
<accession>Q6AYP4</accession>
<sequence>MAGLQLAPHLPVGVMFPHNKTEAHGLHSAKHDPYEQSDSPQRSSMGHLRTSFQQKLWSNTELEQEDVISTHPKRNICTKARRHSCPHSAGISQQGSGNNAQGQGKGLFYLSSPTPRYPKANDQDFIPFRKKRVGVDRAYPLKPMVHRKSHSTSETGIDGDQNGYPRLPDSSEFSDSSFGLRSWVNPSLLASPQAEKVMAQLHRTEWTQIQRLEAAGESLQKEIRRKEILLREKLKKTEEGLRRIQREKKQAIFQEDRELQRMVLPRRRVRDGDLDTTHNSCLSPELRSEVFSRNRGEDQTCEQAQENSSPLQLSDYEIQRLKRERLMVSNNKIRDRDSGPSAGTFSQPAEDLGDELQASSLSGTPGSSGSSSSTEEQELGKCSHCGRSFLSLRLQRHSTVCGKMQGSKRKVFDSSRARAKGTELEQYLNWRGPATDKAEPPPRKSTWRQKHESFIRTLRHARQVQQVIARGGNPSDLPSILPAENPDYVQCPHCSRHFAPKVAERHIPKCKTIKNRPPPPRRHDS</sequence>
<reference key="1">
    <citation type="journal article" date="2004" name="Genome Res.">
        <title>The status, quality, and expansion of the NIH full-length cDNA project: the Mammalian Gene Collection (MGC).</title>
        <authorList>
            <consortium name="The MGC Project Team"/>
        </authorList>
    </citation>
    <scope>NUCLEOTIDE SEQUENCE [LARGE SCALE MRNA]</scope>
    <source>
        <strain>Brown Norway</strain>
        <tissue>Testis</tissue>
    </source>
</reference>
<keyword id="KW-0175">Coiled coil</keyword>
<keyword id="KW-0479">Metal-binding</keyword>
<keyword id="KW-1185">Reference proteome</keyword>
<keyword id="KW-0677">Repeat</keyword>
<keyword id="KW-0862">Zinc</keyword>
<keyword id="KW-0863">Zinc-finger</keyword>